<feature type="signal peptide" evidence="2">
    <location>
        <begin position="1"/>
        <end position="25"/>
    </location>
</feature>
<feature type="chain" id="PRO_0000422843" description="Dirigent protein 12">
    <location>
        <begin position="26"/>
        <end position="185"/>
    </location>
</feature>
<feature type="glycosylation site" description="N-linked (GlcNAc...) asparagine" evidence="2">
    <location>
        <position position="56"/>
    </location>
</feature>
<feature type="glycosylation site" description="N-linked (GlcNAc...) asparagine" evidence="2">
    <location>
        <position position="120"/>
    </location>
</feature>
<feature type="disulfide bond" evidence="1">
    <location>
        <begin position="37"/>
        <end position="184"/>
    </location>
</feature>
<dbReference type="EMBL" id="AF080120">
    <property type="protein sequence ID" value="AAC35542.1"/>
    <property type="molecule type" value="Genomic_DNA"/>
</dbReference>
<dbReference type="EMBL" id="AL049876">
    <property type="protein sequence ID" value="CAB43053.1"/>
    <property type="molecule type" value="Genomic_DNA"/>
</dbReference>
<dbReference type="EMBL" id="AL161531">
    <property type="protein sequence ID" value="CAB81219.1"/>
    <property type="molecule type" value="Genomic_DNA"/>
</dbReference>
<dbReference type="EMBL" id="CP002687">
    <property type="protein sequence ID" value="AEE82982.1"/>
    <property type="molecule type" value="Genomic_DNA"/>
</dbReference>
<dbReference type="EMBL" id="BT004016">
    <property type="protein sequence ID" value="AAO42052.1"/>
    <property type="molecule type" value="mRNA"/>
</dbReference>
<dbReference type="PIR" id="T01914">
    <property type="entry name" value="T01914"/>
</dbReference>
<dbReference type="RefSeq" id="NP_192857.1">
    <property type="nucleotide sequence ID" value="NM_117189.2"/>
</dbReference>
<dbReference type="SMR" id="O82498"/>
<dbReference type="FunCoup" id="O82498">
    <property type="interactions" value="62"/>
</dbReference>
<dbReference type="STRING" id="3702.O82498"/>
<dbReference type="GlyCosmos" id="O82498">
    <property type="glycosylation" value="2 sites, No reported glycans"/>
</dbReference>
<dbReference type="GlyGen" id="O82498">
    <property type="glycosylation" value="2 sites"/>
</dbReference>
<dbReference type="PaxDb" id="3702-AT4G11180.1"/>
<dbReference type="ProteomicsDB" id="222145"/>
<dbReference type="EnsemblPlants" id="AT4G11180.1">
    <property type="protein sequence ID" value="AT4G11180.1"/>
    <property type="gene ID" value="AT4G11180"/>
</dbReference>
<dbReference type="GeneID" id="826720"/>
<dbReference type="Gramene" id="AT4G11180.1">
    <property type="protein sequence ID" value="AT4G11180.1"/>
    <property type="gene ID" value="AT4G11180"/>
</dbReference>
<dbReference type="KEGG" id="ath:AT4G11180"/>
<dbReference type="Araport" id="AT4G11180"/>
<dbReference type="TAIR" id="AT4G11180">
    <property type="gene designation" value="DP1"/>
</dbReference>
<dbReference type="eggNOG" id="ENOG502RXV9">
    <property type="taxonomic scope" value="Eukaryota"/>
</dbReference>
<dbReference type="HOGENOM" id="CLU_087111_0_0_1"/>
<dbReference type="InParanoid" id="O82498"/>
<dbReference type="OMA" id="HETVYNG"/>
<dbReference type="PhylomeDB" id="O82498"/>
<dbReference type="PRO" id="PR:O82498"/>
<dbReference type="Proteomes" id="UP000006548">
    <property type="component" value="Chromosome 4"/>
</dbReference>
<dbReference type="ExpressionAtlas" id="O82498">
    <property type="expression patterns" value="baseline and differential"/>
</dbReference>
<dbReference type="GO" id="GO:0048046">
    <property type="term" value="C:apoplast"/>
    <property type="evidence" value="ECO:0007669"/>
    <property type="project" value="UniProtKB-SubCell"/>
</dbReference>
<dbReference type="GO" id="GO:0009807">
    <property type="term" value="P:lignan biosynthetic process"/>
    <property type="evidence" value="ECO:0000315"/>
    <property type="project" value="TAIR"/>
</dbReference>
<dbReference type="GO" id="GO:0009699">
    <property type="term" value="P:phenylpropanoid biosynthetic process"/>
    <property type="evidence" value="ECO:0000315"/>
    <property type="project" value="TAIR"/>
</dbReference>
<dbReference type="FunFam" id="2.40.480.10:FF:000002">
    <property type="entry name" value="Dirigent protein"/>
    <property type="match status" value="1"/>
</dbReference>
<dbReference type="Gene3D" id="2.40.480.10">
    <property type="entry name" value="Allene oxide cyclase-like"/>
    <property type="match status" value="1"/>
</dbReference>
<dbReference type="InterPro" id="IPR044859">
    <property type="entry name" value="Allene_oxi_cyc_Dirigent"/>
</dbReference>
<dbReference type="InterPro" id="IPR004265">
    <property type="entry name" value="Dirigent"/>
</dbReference>
<dbReference type="PANTHER" id="PTHR46442">
    <property type="entry name" value="DIRIGENT PROTEIN"/>
    <property type="match status" value="1"/>
</dbReference>
<dbReference type="PANTHER" id="PTHR46442:SF11">
    <property type="entry name" value="DIRIGENT PROTEIN 12-RELATED"/>
    <property type="match status" value="1"/>
</dbReference>
<dbReference type="Pfam" id="PF03018">
    <property type="entry name" value="Dirigent"/>
    <property type="match status" value="1"/>
</dbReference>
<comment type="function">
    <text evidence="1 3">Dirigent proteins impart stereoselectivity on the phenoxy radical-coupling reaction, yielding optically active lignans from two molecules of coniferyl alcohol in the biosynthesis of lignans, flavonolignans, and alkaloids and thus plays a central role in plant secondary metabolism (By similarity). Required for seed accumulation of neolignans.</text>
</comment>
<comment type="subunit">
    <text evidence="1">Homodimer.</text>
</comment>
<comment type="subcellular location">
    <subcellularLocation>
        <location evidence="1">Secreted</location>
        <location evidence="1">Extracellular space</location>
        <location evidence="1">Apoplast</location>
    </subcellularLocation>
</comment>
<comment type="tissue specificity">
    <text evidence="3 4">Seed coat specific expression.</text>
</comment>
<comment type="disruption phenotype">
    <text evidence="3">Lacks seed-specific neolignans such as 3-{4-[2-hydroxy-2-(4-hexosyloxy- 3-methoxyphenyl)-1-hydroxymethylethoxy]-3,5-di-methoxyphenyl}acryloylcholine.</text>
</comment>
<comment type="similarity">
    <text evidence="5">Belongs to the plant dirigent protein family.</text>
</comment>
<reference key="1">
    <citation type="journal article" date="1999" name="Nature">
        <title>Sequence and analysis of chromosome 4 of the plant Arabidopsis thaliana.</title>
        <authorList>
            <person name="Mayer K.F.X."/>
            <person name="Schueller C."/>
            <person name="Wambutt R."/>
            <person name="Murphy G."/>
            <person name="Volckaert G."/>
            <person name="Pohl T."/>
            <person name="Duesterhoeft A."/>
            <person name="Stiekema W."/>
            <person name="Entian K.-D."/>
            <person name="Terryn N."/>
            <person name="Harris B."/>
            <person name="Ansorge W."/>
            <person name="Brandt P."/>
            <person name="Grivell L.A."/>
            <person name="Rieger M."/>
            <person name="Weichselgartner M."/>
            <person name="de Simone V."/>
            <person name="Obermaier B."/>
            <person name="Mache R."/>
            <person name="Mueller M."/>
            <person name="Kreis M."/>
            <person name="Delseny M."/>
            <person name="Puigdomenech P."/>
            <person name="Watson M."/>
            <person name="Schmidtheini T."/>
            <person name="Reichert B."/>
            <person name="Portetelle D."/>
            <person name="Perez-Alonso M."/>
            <person name="Boutry M."/>
            <person name="Bancroft I."/>
            <person name="Vos P."/>
            <person name="Hoheisel J."/>
            <person name="Zimmermann W."/>
            <person name="Wedler H."/>
            <person name="Ridley P."/>
            <person name="Langham S.-A."/>
            <person name="McCullagh B."/>
            <person name="Bilham L."/>
            <person name="Robben J."/>
            <person name="van der Schueren J."/>
            <person name="Grymonprez B."/>
            <person name="Chuang Y.-J."/>
            <person name="Vandenbussche F."/>
            <person name="Braeken M."/>
            <person name="Weltjens I."/>
            <person name="Voet M."/>
            <person name="Bastiaens I."/>
            <person name="Aert R."/>
            <person name="Defoor E."/>
            <person name="Weitzenegger T."/>
            <person name="Bothe G."/>
            <person name="Ramsperger U."/>
            <person name="Hilbert H."/>
            <person name="Braun M."/>
            <person name="Holzer E."/>
            <person name="Brandt A."/>
            <person name="Peters S."/>
            <person name="van Staveren M."/>
            <person name="Dirkse W."/>
            <person name="Mooijman P."/>
            <person name="Klein Lankhorst R."/>
            <person name="Rose M."/>
            <person name="Hauf J."/>
            <person name="Koetter P."/>
            <person name="Berneiser S."/>
            <person name="Hempel S."/>
            <person name="Feldpausch M."/>
            <person name="Lamberth S."/>
            <person name="Van den Daele H."/>
            <person name="De Keyser A."/>
            <person name="Buysshaert C."/>
            <person name="Gielen J."/>
            <person name="Villarroel R."/>
            <person name="De Clercq R."/>
            <person name="van Montagu M."/>
            <person name="Rogers J."/>
            <person name="Cronin A."/>
            <person name="Quail M.A."/>
            <person name="Bray-Allen S."/>
            <person name="Clark L."/>
            <person name="Doggett J."/>
            <person name="Hall S."/>
            <person name="Kay M."/>
            <person name="Lennard N."/>
            <person name="McLay K."/>
            <person name="Mayes R."/>
            <person name="Pettett A."/>
            <person name="Rajandream M.A."/>
            <person name="Lyne M."/>
            <person name="Benes V."/>
            <person name="Rechmann S."/>
            <person name="Borkova D."/>
            <person name="Bloecker H."/>
            <person name="Scharfe M."/>
            <person name="Grimm M."/>
            <person name="Loehnert T.-H."/>
            <person name="Dose S."/>
            <person name="de Haan M."/>
            <person name="Maarse A.C."/>
            <person name="Schaefer M."/>
            <person name="Mueller-Auer S."/>
            <person name="Gabel C."/>
            <person name="Fuchs M."/>
            <person name="Fartmann B."/>
            <person name="Granderath K."/>
            <person name="Dauner D."/>
            <person name="Herzl A."/>
            <person name="Neumann S."/>
            <person name="Argiriou A."/>
            <person name="Vitale D."/>
            <person name="Liguori R."/>
            <person name="Piravandi E."/>
            <person name="Massenet O."/>
            <person name="Quigley F."/>
            <person name="Clabauld G."/>
            <person name="Muendlein A."/>
            <person name="Felber R."/>
            <person name="Schnabl S."/>
            <person name="Hiller R."/>
            <person name="Schmidt W."/>
            <person name="Lecharny A."/>
            <person name="Aubourg S."/>
            <person name="Chefdor F."/>
            <person name="Cooke R."/>
            <person name="Berger C."/>
            <person name="Monfort A."/>
            <person name="Casacuberta E."/>
            <person name="Gibbons T."/>
            <person name="Weber N."/>
            <person name="Vandenbol M."/>
            <person name="Bargues M."/>
            <person name="Terol J."/>
            <person name="Torres A."/>
            <person name="Perez-Perez A."/>
            <person name="Purnelle B."/>
            <person name="Bent E."/>
            <person name="Johnson S."/>
            <person name="Tacon D."/>
            <person name="Jesse T."/>
            <person name="Heijnen L."/>
            <person name="Schwarz S."/>
            <person name="Scholler P."/>
            <person name="Heber S."/>
            <person name="Francs P."/>
            <person name="Bielke C."/>
            <person name="Frishman D."/>
            <person name="Haase D."/>
            <person name="Lemcke K."/>
            <person name="Mewes H.-W."/>
            <person name="Stocker S."/>
            <person name="Zaccaria P."/>
            <person name="Bevan M."/>
            <person name="Wilson R.K."/>
            <person name="de la Bastide M."/>
            <person name="Habermann K."/>
            <person name="Parnell L."/>
            <person name="Dedhia N."/>
            <person name="Gnoj L."/>
            <person name="Schutz K."/>
            <person name="Huang E."/>
            <person name="Spiegel L."/>
            <person name="Sekhon M."/>
            <person name="Murray J."/>
            <person name="Sheet P."/>
            <person name="Cordes M."/>
            <person name="Abu-Threideh J."/>
            <person name="Stoneking T."/>
            <person name="Kalicki J."/>
            <person name="Graves T."/>
            <person name="Harmon G."/>
            <person name="Edwards J."/>
            <person name="Latreille P."/>
            <person name="Courtney L."/>
            <person name="Cloud J."/>
            <person name="Abbott A."/>
            <person name="Scott K."/>
            <person name="Johnson D."/>
            <person name="Minx P."/>
            <person name="Bentley D."/>
            <person name="Fulton B."/>
            <person name="Miller N."/>
            <person name="Greco T."/>
            <person name="Kemp K."/>
            <person name="Kramer J."/>
            <person name="Fulton L."/>
            <person name="Mardis E."/>
            <person name="Dante M."/>
            <person name="Pepin K."/>
            <person name="Hillier L.W."/>
            <person name="Nelson J."/>
            <person name="Spieth J."/>
            <person name="Ryan E."/>
            <person name="Andrews S."/>
            <person name="Geisel C."/>
            <person name="Layman D."/>
            <person name="Du H."/>
            <person name="Ali J."/>
            <person name="Berghoff A."/>
            <person name="Jones K."/>
            <person name="Drone K."/>
            <person name="Cotton M."/>
            <person name="Joshu C."/>
            <person name="Antonoiu B."/>
            <person name="Zidanic M."/>
            <person name="Strong C."/>
            <person name="Sun H."/>
            <person name="Lamar B."/>
            <person name="Yordan C."/>
            <person name="Ma P."/>
            <person name="Zhong J."/>
            <person name="Preston R."/>
            <person name="Vil D."/>
            <person name="Shekher M."/>
            <person name="Matero A."/>
            <person name="Shah R."/>
            <person name="Swaby I.K."/>
            <person name="O'Shaughnessy A."/>
            <person name="Rodriguez M."/>
            <person name="Hoffman J."/>
            <person name="Till S."/>
            <person name="Granat S."/>
            <person name="Shohdy N."/>
            <person name="Hasegawa A."/>
            <person name="Hameed A."/>
            <person name="Lodhi M."/>
            <person name="Johnson A."/>
            <person name="Chen E."/>
            <person name="Marra M.A."/>
            <person name="Martienssen R."/>
            <person name="McCombie W.R."/>
        </authorList>
    </citation>
    <scope>NUCLEOTIDE SEQUENCE [LARGE SCALE GENOMIC DNA]</scope>
    <source>
        <strain>cv. Columbia</strain>
    </source>
</reference>
<reference key="2">
    <citation type="journal article" date="2017" name="Plant J.">
        <title>Araport11: a complete reannotation of the Arabidopsis thaliana reference genome.</title>
        <authorList>
            <person name="Cheng C.Y."/>
            <person name="Krishnakumar V."/>
            <person name="Chan A.P."/>
            <person name="Thibaud-Nissen F."/>
            <person name="Schobel S."/>
            <person name="Town C.D."/>
        </authorList>
    </citation>
    <scope>GENOME REANNOTATION</scope>
    <source>
        <strain>cv. Columbia</strain>
    </source>
</reference>
<reference key="3">
    <citation type="journal article" date="2003" name="Science">
        <title>Empirical analysis of transcriptional activity in the Arabidopsis genome.</title>
        <authorList>
            <person name="Yamada K."/>
            <person name="Lim J."/>
            <person name="Dale J.M."/>
            <person name="Chen H."/>
            <person name="Shinn P."/>
            <person name="Palm C.J."/>
            <person name="Southwick A.M."/>
            <person name="Wu H.C."/>
            <person name="Kim C.J."/>
            <person name="Nguyen M."/>
            <person name="Pham P.K."/>
            <person name="Cheuk R.F."/>
            <person name="Karlin-Newmann G."/>
            <person name="Liu S.X."/>
            <person name="Lam B."/>
            <person name="Sakano H."/>
            <person name="Wu T."/>
            <person name="Yu G."/>
            <person name="Miranda M."/>
            <person name="Quach H.L."/>
            <person name="Tripp M."/>
            <person name="Chang C.H."/>
            <person name="Lee J.M."/>
            <person name="Toriumi M.J."/>
            <person name="Chan M.M."/>
            <person name="Tang C.C."/>
            <person name="Onodera C.S."/>
            <person name="Deng J.M."/>
            <person name="Akiyama K."/>
            <person name="Ansari Y."/>
            <person name="Arakawa T."/>
            <person name="Banh J."/>
            <person name="Banno F."/>
            <person name="Bowser L."/>
            <person name="Brooks S.Y."/>
            <person name="Carninci P."/>
            <person name="Chao Q."/>
            <person name="Choy N."/>
            <person name="Enju A."/>
            <person name="Goldsmith A.D."/>
            <person name="Gurjal M."/>
            <person name="Hansen N.F."/>
            <person name="Hayashizaki Y."/>
            <person name="Johnson-Hopson C."/>
            <person name="Hsuan V.W."/>
            <person name="Iida K."/>
            <person name="Karnes M."/>
            <person name="Khan S."/>
            <person name="Koesema E."/>
            <person name="Ishida J."/>
            <person name="Jiang P.X."/>
            <person name="Jones T."/>
            <person name="Kawai J."/>
            <person name="Kamiya A."/>
            <person name="Meyers C."/>
            <person name="Nakajima M."/>
            <person name="Narusaka M."/>
            <person name="Seki M."/>
            <person name="Sakurai T."/>
            <person name="Satou M."/>
            <person name="Tamse R."/>
            <person name="Vaysberg M."/>
            <person name="Wallender E.K."/>
            <person name="Wong C."/>
            <person name="Yamamura Y."/>
            <person name="Yuan S."/>
            <person name="Shinozaki K."/>
            <person name="Davis R.W."/>
            <person name="Theologis A."/>
            <person name="Ecker J.R."/>
        </authorList>
    </citation>
    <scope>NUCLEOTIDE SEQUENCE [LARGE SCALE MRNA]</scope>
    <source>
        <strain>cv. Columbia</strain>
    </source>
</reference>
<reference key="4">
    <citation type="journal article" date="2007" name="Phytochemistry">
        <title>Dirigent proteins in conifer defense II: Extended gene discovery, phylogeny, and constitutive and stress-induced gene expression in spruce (Picea spp.).</title>
        <authorList>
            <person name="Ralph S.G."/>
            <person name="Jancsik S."/>
            <person name="Bohlmann J."/>
        </authorList>
    </citation>
    <scope>GENE FAMILY</scope>
    <scope>NOMENCLATURE</scope>
</reference>
<reference key="5">
    <citation type="journal article" date="2010" name="Plant Physiol.">
        <title>AtMetExpress development: a phytochemical atlas of Arabidopsis development.</title>
        <authorList>
            <person name="Matsuda F."/>
            <person name="Hirai M.Y."/>
            <person name="Sasaki E."/>
            <person name="Akiyama K."/>
            <person name="Yonekura-Sakakibara K."/>
            <person name="Provart N.J."/>
            <person name="Sakurai T."/>
            <person name="Shimada Y."/>
            <person name="Saito K."/>
        </authorList>
    </citation>
    <scope>FUNCTION</scope>
    <scope>DISRUPTION PHENOTYPE</scope>
    <scope>TISSUE SPECIFICITY</scope>
</reference>
<reference key="6">
    <citation type="journal article" date="2013" name="Plant Mol. Biol.">
        <title>Identification and analysis of an outer-seed-coat-specific promoter from Arabidopsis thaliana.</title>
        <authorList>
            <person name="Esfandiari E."/>
            <person name="Jin Z."/>
            <person name="Abdeen A."/>
            <person name="Griffiths J.S."/>
            <person name="Western T.L."/>
            <person name="Haughn G.W."/>
        </authorList>
    </citation>
    <scope>TISSUE SPECIFICITY</scope>
</reference>
<organism>
    <name type="scientific">Arabidopsis thaliana</name>
    <name type="common">Mouse-ear cress</name>
    <dbReference type="NCBI Taxonomy" id="3702"/>
    <lineage>
        <taxon>Eukaryota</taxon>
        <taxon>Viridiplantae</taxon>
        <taxon>Streptophyta</taxon>
        <taxon>Embryophyta</taxon>
        <taxon>Tracheophyta</taxon>
        <taxon>Spermatophyta</taxon>
        <taxon>Magnoliopsida</taxon>
        <taxon>eudicotyledons</taxon>
        <taxon>Gunneridae</taxon>
        <taxon>Pentapetalae</taxon>
        <taxon>rosids</taxon>
        <taxon>malvids</taxon>
        <taxon>Brassicales</taxon>
        <taxon>Brassicaceae</taxon>
        <taxon>Camelineae</taxon>
        <taxon>Arabidopsis</taxon>
    </lineage>
</organism>
<keyword id="KW-0052">Apoplast</keyword>
<keyword id="KW-1015">Disulfide bond</keyword>
<keyword id="KW-0325">Glycoprotein</keyword>
<keyword id="KW-1185">Reference proteome</keyword>
<keyword id="KW-0964">Secreted</keyword>
<keyword id="KW-0732">Signal</keyword>
<protein>
    <recommendedName>
        <fullName>Dirigent protein 12</fullName>
        <shortName>AtDIR12</shortName>
    </recommendedName>
</protein>
<evidence type="ECO:0000250" key="1"/>
<evidence type="ECO:0000255" key="2"/>
<evidence type="ECO:0000269" key="3">
    <source>
    </source>
</evidence>
<evidence type="ECO:0000269" key="4">
    <source>
    </source>
</evidence>
<evidence type="ECO:0000305" key="5"/>
<accession>O82498</accession>
<name>DIR12_ARATH</name>
<sequence length="185" mass="20832">MTNQIYKQVFSFFLSVLLLQSSTVSYVPKSFDLKKPCKHFVLYLHNIAYDGDNAANATAATIVKPLGLGDHSFGELIIINNPVTLDQNYLSKPVARAQGFYFYNMKTNYNAWVAWTLVFNSTKHKGTFTIMDANPFGLQPARDLSIVGGTGDFLMTRGIATFKTKLTQGSKYFCVEMNIKLYECY</sequence>
<proteinExistence type="evidence at transcript level"/>
<gene>
    <name type="primary">DIR12</name>
    <name type="synonym">DP1</name>
    <name type="ordered locus">At4g11180</name>
    <name type="ORF">F2P3.6</name>
</gene>